<comment type="function">
    <text evidence="3 4 5 6">Controls nuclear migration. NUM1 specifically controls the interaction of the bud neck cytoskeleton with the pre-divisional G2 nucleus. Functions in dynein-anchoring. During late anaphase forms dynein-interacting cortical microtubule capture sites at both cellular poles. This leads to dynein-dependent sliding of the microtubules in the bud.</text>
</comment>
<comment type="subunit">
    <text evidence="4">Interacts with PAC11 when DYN1 is present, and TUB3.</text>
</comment>
<comment type="interaction">
    <interactant intactId="EBI-12386">
        <id>Q00402</id>
    </interactant>
    <interactant intactId="EBI-16735">
        <id>P40075</id>
        <label>SCS2</label>
    </interactant>
    <organismsDiffer>false</organismsDiffer>
    <experiments>4</experiments>
</comment>
<comment type="interaction">
    <interactant intactId="EBI-12386">
        <id>Q00402</id>
    </interactant>
    <interactant intactId="EBI-18981">
        <id>P09734</id>
        <label>TUB3</label>
    </interactant>
    <organismsDiffer>false</organismsDiffer>
    <experiments>2</experiments>
</comment>
<comment type="subcellular location">
    <subcellularLocation>
        <location evidence="3 4 6">Bud tip</location>
    </subcellularLocation>
</comment>
<comment type="miscellaneous">
    <text>Additional regions of lower homology to the repeat consensus (always starting with proline) are found in both flanking domains of the tandem repeats.</text>
</comment>
<reference key="1">
    <citation type="journal article" date="1991" name="Mol. Gen. Genet.">
        <title>Nuclear migration in Saccharomyces cerevisiae is controlled by the highly repetitive 313 kDa NUM1 protein.</title>
        <authorList>
            <person name="Kormanec J."/>
            <person name="Schaaff-Gerstenschlaeger I."/>
            <person name="Zimmermann F.K."/>
            <person name="Perecko D."/>
            <person name="Kuentzel H."/>
        </authorList>
    </citation>
    <scope>NUCLEOTIDE SEQUENCE [GENOMIC DNA]</scope>
    <scope>FUNCTION</scope>
    <source>
        <strain>ATCC 28383 / FL100 / VTT C-80102</strain>
    </source>
</reference>
<reference key="2">
    <citation type="journal article" date="1997" name="Nature">
        <title>The nucleotide sequence of Saccharomyces cerevisiae chromosome IV.</title>
        <authorList>
            <person name="Jacq C."/>
            <person name="Alt-Moerbe J."/>
            <person name="Andre B."/>
            <person name="Arnold W."/>
            <person name="Bahr A."/>
            <person name="Ballesta J.P.G."/>
            <person name="Bargues M."/>
            <person name="Baron L."/>
            <person name="Becker A."/>
            <person name="Biteau N."/>
            <person name="Bloecker H."/>
            <person name="Blugeon C."/>
            <person name="Boskovic J."/>
            <person name="Brandt P."/>
            <person name="Brueckner M."/>
            <person name="Buitrago M.J."/>
            <person name="Coster F."/>
            <person name="Delaveau T."/>
            <person name="del Rey F."/>
            <person name="Dujon B."/>
            <person name="Eide L.G."/>
            <person name="Garcia-Cantalejo J.M."/>
            <person name="Goffeau A."/>
            <person name="Gomez-Peris A."/>
            <person name="Granotier C."/>
            <person name="Hanemann V."/>
            <person name="Hankeln T."/>
            <person name="Hoheisel J.D."/>
            <person name="Jaeger W."/>
            <person name="Jimenez A."/>
            <person name="Jonniaux J.-L."/>
            <person name="Kraemer C."/>
            <person name="Kuester H."/>
            <person name="Laamanen P."/>
            <person name="Legros Y."/>
            <person name="Louis E.J."/>
            <person name="Moeller-Rieker S."/>
            <person name="Monnet A."/>
            <person name="Moro M."/>
            <person name="Mueller-Auer S."/>
            <person name="Nussbaumer B."/>
            <person name="Paricio N."/>
            <person name="Paulin L."/>
            <person name="Perea J."/>
            <person name="Perez-Alonso M."/>
            <person name="Perez-Ortin J.E."/>
            <person name="Pohl T.M."/>
            <person name="Prydz H."/>
            <person name="Purnelle B."/>
            <person name="Rasmussen S.W."/>
            <person name="Remacha M.A."/>
            <person name="Revuelta J.L."/>
            <person name="Rieger M."/>
            <person name="Salom D."/>
            <person name="Saluz H.P."/>
            <person name="Saiz J.E."/>
            <person name="Saren A.-M."/>
            <person name="Schaefer M."/>
            <person name="Scharfe M."/>
            <person name="Schmidt E.R."/>
            <person name="Schneider C."/>
            <person name="Scholler P."/>
            <person name="Schwarz S."/>
            <person name="Soler-Mira A."/>
            <person name="Urrestarazu L.A."/>
            <person name="Verhasselt P."/>
            <person name="Vissers S."/>
            <person name="Voet M."/>
            <person name="Volckaert G."/>
            <person name="Wagner G."/>
            <person name="Wambutt R."/>
            <person name="Wedler E."/>
            <person name="Wedler H."/>
            <person name="Woelfl S."/>
            <person name="Harris D.E."/>
            <person name="Bowman S."/>
            <person name="Brown D."/>
            <person name="Churcher C.M."/>
            <person name="Connor R."/>
            <person name="Dedman K."/>
            <person name="Gentles S."/>
            <person name="Hamlin N."/>
            <person name="Hunt S."/>
            <person name="Jones L."/>
            <person name="McDonald S."/>
            <person name="Murphy L.D."/>
            <person name="Niblett D."/>
            <person name="Odell C."/>
            <person name="Oliver K."/>
            <person name="Rajandream M.A."/>
            <person name="Richards C."/>
            <person name="Shore L."/>
            <person name="Walsh S.V."/>
            <person name="Barrell B.G."/>
            <person name="Dietrich F.S."/>
            <person name="Mulligan J.T."/>
            <person name="Allen E."/>
            <person name="Araujo R."/>
            <person name="Aviles E."/>
            <person name="Berno A."/>
            <person name="Carpenter J."/>
            <person name="Chen E."/>
            <person name="Cherry J.M."/>
            <person name="Chung E."/>
            <person name="Duncan M."/>
            <person name="Hunicke-Smith S."/>
            <person name="Hyman R.W."/>
            <person name="Komp C."/>
            <person name="Lashkari D."/>
            <person name="Lew H."/>
            <person name="Lin D."/>
            <person name="Mosedale D."/>
            <person name="Nakahara K."/>
            <person name="Namath A."/>
            <person name="Oefner P."/>
            <person name="Oh C."/>
            <person name="Petel F.X."/>
            <person name="Roberts D."/>
            <person name="Schramm S."/>
            <person name="Schroeder M."/>
            <person name="Shogren T."/>
            <person name="Shroff N."/>
            <person name="Winant A."/>
            <person name="Yelton M.A."/>
            <person name="Botstein D."/>
            <person name="Davis R.W."/>
            <person name="Johnston M."/>
            <person name="Andrews S."/>
            <person name="Brinkman R."/>
            <person name="Cooper J."/>
            <person name="Ding H."/>
            <person name="Du Z."/>
            <person name="Favello A."/>
            <person name="Fulton L."/>
            <person name="Gattung S."/>
            <person name="Greco T."/>
            <person name="Hallsworth K."/>
            <person name="Hawkins J."/>
            <person name="Hillier L.W."/>
            <person name="Jier M."/>
            <person name="Johnson D."/>
            <person name="Johnston L."/>
            <person name="Kirsten J."/>
            <person name="Kucaba T."/>
            <person name="Langston Y."/>
            <person name="Latreille P."/>
            <person name="Le T."/>
            <person name="Mardis E."/>
            <person name="Menezes S."/>
            <person name="Miller N."/>
            <person name="Nhan M."/>
            <person name="Pauley A."/>
            <person name="Peluso D."/>
            <person name="Rifkin L."/>
            <person name="Riles L."/>
            <person name="Taich A."/>
            <person name="Trevaskis E."/>
            <person name="Vignati D."/>
            <person name="Wilcox L."/>
            <person name="Wohldman P."/>
            <person name="Vaudin M."/>
            <person name="Wilson R."/>
            <person name="Waterston R."/>
            <person name="Albermann K."/>
            <person name="Hani J."/>
            <person name="Heumann K."/>
            <person name="Kleine K."/>
            <person name="Mewes H.-W."/>
            <person name="Zollner A."/>
            <person name="Zaccaria P."/>
        </authorList>
    </citation>
    <scope>NUCLEOTIDE SEQUENCE [LARGE SCALE GENOMIC DNA]</scope>
    <source>
        <strain>ATCC 204508 / S288c</strain>
    </source>
</reference>
<reference key="3">
    <citation type="journal article" date="2014" name="G3 (Bethesda)">
        <title>The reference genome sequence of Saccharomyces cerevisiae: Then and now.</title>
        <authorList>
            <person name="Engel S.R."/>
            <person name="Dietrich F.S."/>
            <person name="Fisk D.G."/>
            <person name="Binkley G."/>
            <person name="Balakrishnan R."/>
            <person name="Costanzo M.C."/>
            <person name="Dwight S.S."/>
            <person name="Hitz B.C."/>
            <person name="Karra K."/>
            <person name="Nash R.S."/>
            <person name="Weng S."/>
            <person name="Wong E.D."/>
            <person name="Lloyd P."/>
            <person name="Skrzypek M.S."/>
            <person name="Miyasato S.R."/>
            <person name="Simison M."/>
            <person name="Cherry J.M."/>
        </authorList>
    </citation>
    <scope>GENOME REANNOTATION</scope>
    <source>
        <strain>ATCC 204508 / S288c</strain>
    </source>
</reference>
<reference key="4">
    <citation type="journal article" date="1995" name="J. Cell Biol.">
        <title>Yeast Num1p associates with the mother cell cortex during S/G2 phase and affects microtubular functions.</title>
        <authorList>
            <person name="Farkasovsky M."/>
            <person name="Kuentzel H."/>
        </authorList>
    </citation>
    <scope>FUNCTION</scope>
    <scope>SUBCELLULAR LOCATION</scope>
</reference>
<reference key="5">
    <citation type="journal article" date="2000" name="J. Cell Biol.">
        <title>The cortical protein Num1p is essential for dynein-dependent interactions of microtubules with the cortex.</title>
        <authorList>
            <person name="Heil-Chapdelaine R.A."/>
            <person name="Oberle J.R."/>
            <person name="Cooper J.A."/>
        </authorList>
    </citation>
    <scope>FUNCTION</scope>
    <scope>SUBCELLULAR LOCATION</scope>
</reference>
<reference key="6">
    <citation type="journal article" date="2001" name="J. Cell Biol.">
        <title>Cortical Num1p interacts with the dynein intermediate chain Pac11p and cytoplasmic microtubules in budding yeast.</title>
        <authorList>
            <person name="Farkasovsky M."/>
            <person name="Kuentzel H."/>
        </authorList>
    </citation>
    <scope>FUNCTION</scope>
    <scope>INTERACTION WITH PAC11 AND TUB3</scope>
    <scope>SUBCELLULAR LOCATION</scope>
</reference>
<reference key="7">
    <citation type="journal article" date="2007" name="J. Proteome Res.">
        <title>Large-scale phosphorylation analysis of alpha-factor-arrested Saccharomyces cerevisiae.</title>
        <authorList>
            <person name="Li X."/>
            <person name="Gerber S.A."/>
            <person name="Rudner A.D."/>
            <person name="Beausoleil S.A."/>
            <person name="Haas W."/>
            <person name="Villen J."/>
            <person name="Elias J.E."/>
            <person name="Gygi S.P."/>
        </authorList>
    </citation>
    <scope>PHOSPHORYLATION [LARGE SCALE ANALYSIS] AT SER-2197</scope>
    <scope>IDENTIFICATION BY MASS SPECTROMETRY [LARGE SCALE ANALYSIS]</scope>
    <source>
        <strain>ADR376</strain>
    </source>
</reference>
<reference key="8">
    <citation type="journal article" date="2007" name="Proc. Natl. Acad. Sci. U.S.A.">
        <title>Analysis of phosphorylation sites on proteins from Saccharomyces cerevisiae by electron transfer dissociation (ETD) mass spectrometry.</title>
        <authorList>
            <person name="Chi A."/>
            <person name="Huttenhower C."/>
            <person name="Geer L.Y."/>
            <person name="Coon J.J."/>
            <person name="Syka J.E.P."/>
            <person name="Bai D.L."/>
            <person name="Shabanowitz J."/>
            <person name="Burke D.J."/>
            <person name="Troyanskaya O.G."/>
            <person name="Hunt D.F."/>
        </authorList>
    </citation>
    <scope>IDENTIFICATION BY MASS SPECTROMETRY [LARGE SCALE ANALYSIS]</scope>
</reference>
<reference key="9">
    <citation type="journal article" date="2008" name="Mol. Cell. Proteomics">
        <title>A multidimensional chromatography technology for in-depth phosphoproteome analysis.</title>
        <authorList>
            <person name="Albuquerque C.P."/>
            <person name="Smolka M.B."/>
            <person name="Payne S.H."/>
            <person name="Bafna V."/>
            <person name="Eng J."/>
            <person name="Zhou H."/>
        </authorList>
    </citation>
    <scope>PHOSPHORYLATION [LARGE SCALE ANALYSIS] AT SER-611; SER-675; SER-746; SER-881; SER-945; SER-1009; SER-1201; SER-1265; SER-1329; SER-2197; SER-2220 AND SER-2221</scope>
    <scope>IDENTIFICATION BY MASS SPECTROMETRY [LARGE SCALE ANALYSIS]</scope>
</reference>
<reference key="10">
    <citation type="journal article" date="2009" name="Science">
        <title>Global analysis of Cdk1 substrate phosphorylation sites provides insights into evolution.</title>
        <authorList>
            <person name="Holt L.J."/>
            <person name="Tuch B.B."/>
            <person name="Villen J."/>
            <person name="Johnson A.D."/>
            <person name="Gygi S.P."/>
            <person name="Morgan D.O."/>
        </authorList>
    </citation>
    <scope>PHOSPHORYLATION [LARGE SCALE ANALYSIS] AT SER-746; SER-881; SER-945; SER-1201; SER-1265; SER-2162; SER-2164; SER-2217; SER-2220; SER-2221; SER-2360; SER-2424; SER-2494 AND SER-2545</scope>
    <scope>IDENTIFICATION BY MASS SPECTROMETRY [LARGE SCALE ANALYSIS]</scope>
</reference>
<keyword id="KW-0597">Phosphoprotein</keyword>
<keyword id="KW-1185">Reference proteome</keyword>
<keyword id="KW-0677">Repeat</keyword>
<dbReference type="EMBL" id="X61236">
    <property type="protein sequence ID" value="CAA43554.1"/>
    <property type="molecule type" value="Genomic_DNA"/>
</dbReference>
<dbReference type="EMBL" id="Z50046">
    <property type="protein sequence ID" value="CAA90372.1"/>
    <property type="molecule type" value="Genomic_DNA"/>
</dbReference>
<dbReference type="EMBL" id="BK006938">
    <property type="protein sequence ID" value="DAA11992.1"/>
    <property type="molecule type" value="Genomic_DNA"/>
</dbReference>
<dbReference type="PIR" id="S57976">
    <property type="entry name" value="S57976"/>
</dbReference>
<dbReference type="RefSeq" id="NP_010434.1">
    <property type="nucleotide sequence ID" value="NM_001180457.1"/>
</dbReference>
<dbReference type="SMR" id="Q00402"/>
<dbReference type="BioGRID" id="32203">
    <property type="interactions" value="689"/>
</dbReference>
<dbReference type="ComplexPortal" id="CPX-8559">
    <property type="entry name" value="MECA complex"/>
</dbReference>
<dbReference type="DIP" id="DIP-3018N"/>
<dbReference type="FunCoup" id="Q00402">
    <property type="interactions" value="246"/>
</dbReference>
<dbReference type="IntAct" id="Q00402">
    <property type="interactions" value="30"/>
</dbReference>
<dbReference type="MINT" id="Q00402"/>
<dbReference type="STRING" id="4932.YDR150W"/>
<dbReference type="iPTMnet" id="Q00402"/>
<dbReference type="PaxDb" id="4932-YDR150W"/>
<dbReference type="PeptideAtlas" id="Q00402"/>
<dbReference type="EnsemblFungi" id="YDR150W_mRNA">
    <property type="protein sequence ID" value="YDR150W"/>
    <property type="gene ID" value="YDR150W"/>
</dbReference>
<dbReference type="GeneID" id="851727"/>
<dbReference type="KEGG" id="sce:YDR150W"/>
<dbReference type="AGR" id="SGD:S000002557"/>
<dbReference type="SGD" id="S000002557">
    <property type="gene designation" value="NUM1"/>
</dbReference>
<dbReference type="VEuPathDB" id="FungiDB:YDR150W"/>
<dbReference type="eggNOG" id="ENOG502QRR7">
    <property type="taxonomic scope" value="Eukaryota"/>
</dbReference>
<dbReference type="HOGENOM" id="CLU_000674_0_0_1"/>
<dbReference type="InParanoid" id="Q00402"/>
<dbReference type="OMA" id="EQPNEQH"/>
<dbReference type="OrthoDB" id="2149224at2759"/>
<dbReference type="BioCyc" id="YEAST:G3O-29744-MONOMER"/>
<dbReference type="BioGRID-ORCS" id="851727">
    <property type="hits" value="0 hits in 10 CRISPR screens"/>
</dbReference>
<dbReference type="PRO" id="PR:Q00402"/>
<dbReference type="Proteomes" id="UP000002311">
    <property type="component" value="Chromosome IV"/>
</dbReference>
<dbReference type="RNAct" id="Q00402">
    <property type="molecule type" value="protein"/>
</dbReference>
<dbReference type="GO" id="GO:0005938">
    <property type="term" value="C:cell cortex"/>
    <property type="evidence" value="ECO:0000314"/>
    <property type="project" value="SGD"/>
</dbReference>
<dbReference type="GO" id="GO:0005934">
    <property type="term" value="C:cellular bud tip"/>
    <property type="evidence" value="ECO:0000314"/>
    <property type="project" value="SGD"/>
</dbReference>
<dbReference type="GO" id="GO:0005783">
    <property type="term" value="C:endoplasmic reticulum"/>
    <property type="evidence" value="ECO:0000314"/>
    <property type="project" value="SGD"/>
</dbReference>
<dbReference type="GO" id="GO:0044233">
    <property type="term" value="C:mitochondria-associated endoplasmic reticulum membrane contact site"/>
    <property type="evidence" value="ECO:0000314"/>
    <property type="project" value="SGD"/>
</dbReference>
<dbReference type="GO" id="GO:0005739">
    <property type="term" value="C:mitochondrion"/>
    <property type="evidence" value="ECO:0007005"/>
    <property type="project" value="SGD"/>
</dbReference>
<dbReference type="GO" id="GO:0005546">
    <property type="term" value="F:phosphatidylinositol-4,5-bisphosphate binding"/>
    <property type="evidence" value="ECO:0000314"/>
    <property type="project" value="SGD"/>
</dbReference>
<dbReference type="GO" id="GO:0015631">
    <property type="term" value="F:tubulin binding"/>
    <property type="evidence" value="ECO:0000314"/>
    <property type="project" value="SGD"/>
</dbReference>
<dbReference type="GO" id="GO:0048312">
    <property type="term" value="P:intracellular distribution of mitochondria"/>
    <property type="evidence" value="ECO:0000315"/>
    <property type="project" value="SGD"/>
</dbReference>
<dbReference type="GO" id="GO:0032065">
    <property type="term" value="P:maintenance of protein location in cell cortex"/>
    <property type="evidence" value="ECO:0007669"/>
    <property type="project" value="InterPro"/>
</dbReference>
<dbReference type="GO" id="GO:0000226">
    <property type="term" value="P:microtubule cytoskeleton organization"/>
    <property type="evidence" value="ECO:0000315"/>
    <property type="project" value="SGD"/>
</dbReference>
<dbReference type="GO" id="GO:0000266">
    <property type="term" value="P:mitochondrial fission"/>
    <property type="evidence" value="ECO:0000315"/>
    <property type="project" value="SGD"/>
</dbReference>
<dbReference type="GO" id="GO:0000001">
    <property type="term" value="P:mitochondrion inheritance"/>
    <property type="evidence" value="ECO:0000315"/>
    <property type="project" value="SGD"/>
</dbReference>
<dbReference type="GO" id="GO:0030473">
    <property type="term" value="P:nuclear migration along microtubule"/>
    <property type="evidence" value="ECO:0000315"/>
    <property type="project" value="SGD"/>
</dbReference>
<dbReference type="CDD" id="cd13365">
    <property type="entry name" value="PH_PLC_plant-like"/>
    <property type="match status" value="1"/>
</dbReference>
<dbReference type="InterPro" id="IPR053005">
    <property type="entry name" value="Nuclear_Pos-Cytoskel_Interact"/>
</dbReference>
<dbReference type="InterPro" id="IPR024774">
    <property type="entry name" value="PH_dom-Mcp5-type"/>
</dbReference>
<dbReference type="InterPro" id="IPR001849">
    <property type="entry name" value="PH_domain"/>
</dbReference>
<dbReference type="PANTHER" id="PTHR28190">
    <property type="entry name" value="NUCLEAR MIGRATION PROTEIN NUM1"/>
    <property type="match status" value="1"/>
</dbReference>
<dbReference type="PANTHER" id="PTHR28190:SF1">
    <property type="entry name" value="NUCLEAR MIGRATION PROTEIN NUM1"/>
    <property type="match status" value="1"/>
</dbReference>
<dbReference type="Pfam" id="PF12814">
    <property type="entry name" value="Mcp5_PH"/>
    <property type="match status" value="1"/>
</dbReference>
<dbReference type="SMART" id="SM00233">
    <property type="entry name" value="PH"/>
    <property type="match status" value="1"/>
</dbReference>
<dbReference type="SUPFAM" id="SSF50729">
    <property type="entry name" value="PH domain-like"/>
    <property type="match status" value="1"/>
</dbReference>
<dbReference type="PROSITE" id="PS50003">
    <property type="entry name" value="PH_DOMAIN"/>
    <property type="match status" value="1"/>
</dbReference>
<organism>
    <name type="scientific">Saccharomyces cerevisiae (strain ATCC 204508 / S288c)</name>
    <name type="common">Baker's yeast</name>
    <dbReference type="NCBI Taxonomy" id="559292"/>
    <lineage>
        <taxon>Eukaryota</taxon>
        <taxon>Fungi</taxon>
        <taxon>Dikarya</taxon>
        <taxon>Ascomycota</taxon>
        <taxon>Saccharomycotina</taxon>
        <taxon>Saccharomycetes</taxon>
        <taxon>Saccharomycetales</taxon>
        <taxon>Saccharomycetaceae</taxon>
        <taxon>Saccharomyces</taxon>
    </lineage>
</organism>
<accession>Q00402</accession>
<accession>D6VSD2</accession>
<accession>Q03767</accession>
<name>NUM1_YEAST</name>
<feature type="chain" id="PRO_0000057997" description="Nuclear migration protein NUM1">
    <location>
        <begin position="1"/>
        <end position="2748"/>
    </location>
</feature>
<feature type="repeat" description="1">
    <location>
        <begin position="593"/>
        <end position="656"/>
    </location>
</feature>
<feature type="repeat" description="2">
    <location>
        <begin position="657"/>
        <end position="727"/>
    </location>
</feature>
<feature type="repeat" description="3">
    <location>
        <begin position="728"/>
        <end position="798"/>
    </location>
</feature>
<feature type="repeat" description="4">
    <location>
        <begin position="799"/>
        <end position="862"/>
    </location>
</feature>
<feature type="repeat" description="5">
    <location>
        <begin position="863"/>
        <end position="926"/>
    </location>
</feature>
<feature type="repeat" description="6">
    <location>
        <begin position="927"/>
        <end position="990"/>
    </location>
</feature>
<feature type="repeat" description="7">
    <location>
        <begin position="991"/>
        <end position="1054"/>
    </location>
</feature>
<feature type="repeat" description="8">
    <location>
        <begin position="1055"/>
        <end position="1118"/>
    </location>
</feature>
<feature type="repeat" description="9">
    <location>
        <begin position="1119"/>
        <end position="1182"/>
    </location>
</feature>
<feature type="repeat" description="10">
    <location>
        <begin position="1183"/>
        <end position="1246"/>
    </location>
</feature>
<feature type="repeat" description="11">
    <location>
        <begin position="1247"/>
        <end position="1310"/>
    </location>
</feature>
<feature type="repeat" description="12">
    <location>
        <begin position="1311"/>
        <end position="1374"/>
    </location>
</feature>
<feature type="repeat" description="13; truncated">
    <location>
        <begin position="1375"/>
        <end position="1384"/>
    </location>
</feature>
<feature type="domain" description="PH" evidence="1">
    <location>
        <begin position="2573"/>
        <end position="2683"/>
    </location>
</feature>
<feature type="region of interest" description="Disordered" evidence="2">
    <location>
        <begin position="1"/>
        <end position="36"/>
    </location>
</feature>
<feature type="region of interest" description="Disordered" evidence="2">
    <location>
        <begin position="290"/>
        <end position="312"/>
    </location>
</feature>
<feature type="region of interest" description="13 X tandem repeats">
    <location>
        <begin position="593"/>
        <end position="1384"/>
    </location>
</feature>
<feature type="region of interest" description="Disordered" evidence="2">
    <location>
        <begin position="2111"/>
        <end position="2133"/>
    </location>
</feature>
<feature type="region of interest" description="Disordered" evidence="2">
    <location>
        <begin position="2444"/>
        <end position="2536"/>
    </location>
</feature>
<feature type="region of interest" description="Disordered" evidence="2">
    <location>
        <begin position="2707"/>
        <end position="2748"/>
    </location>
</feature>
<feature type="compositionally biased region" description="Basic residues" evidence="2">
    <location>
        <begin position="1"/>
        <end position="10"/>
    </location>
</feature>
<feature type="compositionally biased region" description="Polar residues" evidence="2">
    <location>
        <begin position="17"/>
        <end position="36"/>
    </location>
</feature>
<feature type="compositionally biased region" description="Low complexity" evidence="2">
    <location>
        <begin position="293"/>
        <end position="304"/>
    </location>
</feature>
<feature type="compositionally biased region" description="Low complexity" evidence="2">
    <location>
        <begin position="2122"/>
        <end position="2133"/>
    </location>
</feature>
<feature type="compositionally biased region" description="Basic and acidic residues" evidence="2">
    <location>
        <begin position="2444"/>
        <end position="2460"/>
    </location>
</feature>
<feature type="compositionally biased region" description="Polar residues" evidence="2">
    <location>
        <begin position="2465"/>
        <end position="2474"/>
    </location>
</feature>
<feature type="compositionally biased region" description="Basic and acidic residues" evidence="2">
    <location>
        <begin position="2492"/>
        <end position="2503"/>
    </location>
</feature>
<feature type="compositionally biased region" description="Basic residues" evidence="2">
    <location>
        <begin position="2504"/>
        <end position="2514"/>
    </location>
</feature>
<feature type="compositionally biased region" description="Low complexity" evidence="2">
    <location>
        <begin position="2516"/>
        <end position="2532"/>
    </location>
</feature>
<feature type="compositionally biased region" description="Low complexity" evidence="2">
    <location>
        <begin position="2720"/>
        <end position="2730"/>
    </location>
</feature>
<feature type="modified residue" description="Phosphoserine" evidence="9">
    <location>
        <position position="611"/>
    </location>
</feature>
<feature type="modified residue" description="Phosphoserine" evidence="9">
    <location>
        <position position="675"/>
    </location>
</feature>
<feature type="modified residue" description="Phosphoserine" evidence="9 10">
    <location>
        <position position="746"/>
    </location>
</feature>
<feature type="modified residue" description="Phosphoserine" evidence="9 10">
    <location>
        <position position="881"/>
    </location>
</feature>
<feature type="modified residue" description="Phosphoserine" evidence="9 10">
    <location>
        <position position="945"/>
    </location>
</feature>
<feature type="modified residue" description="Phosphoserine" evidence="9">
    <location>
        <position position="1009"/>
    </location>
</feature>
<feature type="modified residue" description="Phosphoserine" evidence="9 10">
    <location>
        <position position="1201"/>
    </location>
</feature>
<feature type="modified residue" description="Phosphoserine" evidence="9 10">
    <location>
        <position position="1265"/>
    </location>
</feature>
<feature type="modified residue" description="Phosphoserine" evidence="9">
    <location>
        <position position="1329"/>
    </location>
</feature>
<feature type="modified residue" description="Phosphoserine" evidence="10">
    <location>
        <position position="2162"/>
    </location>
</feature>
<feature type="modified residue" description="Phosphoserine" evidence="10">
    <location>
        <position position="2164"/>
    </location>
</feature>
<feature type="modified residue" description="Phosphoserine" evidence="8 9">
    <location>
        <position position="2197"/>
    </location>
</feature>
<feature type="modified residue" description="Phosphoserine" evidence="10">
    <location>
        <position position="2217"/>
    </location>
</feature>
<feature type="modified residue" description="Phosphoserine" evidence="9 10">
    <location>
        <position position="2220"/>
    </location>
</feature>
<feature type="modified residue" description="Phosphoserine" evidence="9 10">
    <location>
        <position position="2221"/>
    </location>
</feature>
<feature type="modified residue" description="Phosphoserine" evidence="10">
    <location>
        <position position="2360"/>
    </location>
</feature>
<feature type="modified residue" description="Phosphoserine" evidence="10">
    <location>
        <position position="2424"/>
    </location>
</feature>
<feature type="modified residue" description="Phosphoserine" evidence="10">
    <location>
        <position position="2494"/>
    </location>
</feature>
<feature type="modified residue" description="Phosphoserine" evidence="10">
    <location>
        <position position="2545"/>
    </location>
</feature>
<feature type="sequence conflict" description="In Ref. 1; CAA43554." evidence="7" ref="1">
    <original>A</original>
    <variation>V</variation>
    <location>
        <position position="1570"/>
    </location>
</feature>
<feature type="sequence conflict" description="In Ref. 1; CAA43554." evidence="7" ref="1">
    <original>E</original>
    <variation>K</variation>
    <location>
        <position position="1822"/>
    </location>
</feature>
<feature type="sequence conflict" description="In Ref. 1; CAA43554." evidence="7" ref="1">
    <original>KAS</original>
    <variation>RHL</variation>
    <location>
        <begin position="1960"/>
        <end position="1962"/>
    </location>
</feature>
<feature type="sequence conflict" description="In Ref. 1; CAA43554." evidence="7" ref="1">
    <original>KD</original>
    <variation>RN</variation>
    <location>
        <begin position="1971"/>
        <end position="1972"/>
    </location>
</feature>
<feature type="sequence conflict" description="In Ref. 1; CAA43554." evidence="7" ref="1">
    <original>S</original>
    <variation>N</variation>
    <location>
        <position position="2049"/>
    </location>
</feature>
<feature type="sequence conflict" description="In Ref. 1; CAA43554." evidence="7" ref="1">
    <original>V</original>
    <variation>A</variation>
    <location>
        <position position="2637"/>
    </location>
</feature>
<protein>
    <recommendedName>
        <fullName>Nuclear migration protein NUM1</fullName>
    </recommendedName>
</protein>
<sequence length="2748" mass="313033">MSHNNRHKKNNDKDSSAGQYANSIDNSLSQESVSTNGVTRMANLKADECGSGDEGDKTKRFSISSILSKRETKDVLPEFAGSSSHNGVLTANSSKDMNFTLELSENLLVECRKLQSSNEAKNEQIKSLKQIKESLSDKIEELTNQKKSFMKELDSTKDLNWDLESKLTNLSMECRQLKELKKKTEKSWNDEKESLKLLKTDLEILTLTKNGMENDLSSQKLHYDKEISELKERILDLNNENDRLLISVSDLTSEINSLQSNRTERIKIQKQLDDAKASISSLKRKVQKKYYQKQHTSDTTVTSDPDSEGTTSEEDIFDIVIEIDHMIETGPSVEDISEDLVKKYSEKNNMILLSNDSYKNLLQKSESASKPKDDELMTKEVAENLNMIALPNDDNYSKKEFSLESHIKYLEASGYKVLPLEEFENLNESLSNPSYNYLKEKLQALKKIPIDQSTFNLLKEPTIDFLLPLTSKIDCLIIPTKDYNDLFESVKNPSIEQMKKCLEAKNDLQSNICKWLEERNGCKWLSNDLYFSMVNKIETPSKQYLSDKAKEYDQVLIDTKALEGLKNPTIDFLREKASASDYLLLKKEDYVSPSLEYLVEHAKATNHHLLSDSAYEDLVKCKENPDMEFLKEKSAKLGHTVVSNEAYSELEKKLEQPSLEYLVEHAKATNHHLLSDSAYEDLVKCKENPDMEFLKEKSAKLGHTVVSNEAYSELQRKYSELEKEVEQPSLAYLVEHAKATDHHLLSDSAYEDLVKCKENPDVEFLKEKSAKLGHTVVSSEEYSELQRKYSELEKEVEQPSLAYLVEHAKATDHHLLSDSAYEELVKCKENPDMEFLKEKSAKLGHTVVSNEAYSELEKKLEQPSLAYLVEHAKATDHHLLSDSAYEDLVKCKENSDVEFLKEKSAKLGHTVVSNEAYSELEKKLEQPSLAYLVEHAKATDHHLLSDSAYEDLVKCKENPDMEFLKEKSAKLGHTVVSNEAYSELEKKLEQPSLEYLVEHAKATNHHLLSDSAYEDLVKCKENPDMEFLKEKSAKLGHTVVSNEAYSELEKKLEQPSLEYLVEHAKATNHHLLSDSAYEELVKCKENPDVEFLKEKSAKLGHTVVSNEAYSELEKKLEQPSLEYLVEHAKATNHHLLSDSAYEELVKCKENPDVEFLKEKSAKLGHTVVSNEAYSELEKKLEQPSLAYLVEHAKATDHHLLSDSAYEDLVKCKENPDVEFLKEKSAKLGHTVVSNEAYSELEKKLEQPSLAYLVEHAKATDHHLLSDSAYEDLVKCKENPDMEFLKEKSAKLGHTVVSNEAYSELEKKLEQPSLEYLVEHAKATNHHLLSDSAYEDLVKCKENPDMEFLKEKSAKLGHTVVSNKEYSELEKKLEQPSLEYLVKHAEQIQSKIISISDFNTLANPSMEDMASKLQKLEYQIVSNDEYIALKNTMEKPDVELLRSKLKGYHIIDTTTYNELVSNFNSPTLKFIEEKAKSKGYRLIEPNEYLDLNRIATTPSKEEIDNFCKQIGCYALDSKEYERLKNSLENPSKKFIEENAALLDLVLVDKTEYQAMKDNASNKKSLIPSTKALDFVTMPAPQLASAEKSSLQKRTLSDIENELKALGYVAIRKENLPNLEKPIVDNASKNDVLNLCSKFSLVPLSTEEYDNMRKEHTKILNILGDPSIDFLKEKCEKYQMLIISKHDYEEKQEAIENPGYEFILEKASALGYELVSEVELDRMKQMIDSPDIDYMQEKAARNEMVLLRNEEKEALQKKIEYPSLTFLIEKAAGMNKILVDQIEYDETIRKCNHPTRMELEESCHHLNLVLLDQNEYSTLREPLENRNVEDLINTLSKLNYIAIPNTIYQDLIGKYENPNFDYLKDSLNKMDYVAISRQDYELMVAKYEKPQLDYLKISSEKIDHIVVPLSEYNLMVTNYRNPSLSYLKEKAVLNNHILIKEDDYKNILAVSEHPTVIHLSEKASLLNKVLVDKDDFATMSRSIEKPTIDFLSTKALSMGKILVNESTHKRNEKLLSEPDSEFLTMKAKEQGLIIISEKEYSELRDQIDRPSLDVLKEKAAIFDSIIVENIEYQQLVNTTSPCPPITYEDLKVYAHQFGMELCLQKPNKLSGAERAERIDEQSINTTSSNSTTTSSMFTDALDDNIEELNRVELQNNEDYTDIISKSSTVKDATIFIPAYENIKNSAEKLGYKLVPFEKSNINLKNIEAPLFSKDNDDTSVASSIDLDHLSRKAEKYGMTLISDQEFEEYHILKDNAVNLNGGMEEMNNPLSENQNLAAKTTNTAQEGAFQNTVPHNDMDNEEVEYGPDDPTFTVRQLKKPAGDRNLILTSREKTLLSRDDNIMSQNEAVYGDDISDSFVDESQEIKNDVDIIKTQAMKYGMLCIPESNFVGASYASAQDMSDIVVLSASYYHNLMSPEDMKWNCVSNEELQAEVKKRGLQIALTTKEDKKGQATASKHEYVSHKLNNKTSTVSTKSGAKKGLAEAAATTAYEDSESHPQIEEQSHRTNHHKHHKRQQSLNSNSTSKTTHSSRNTPASRRDIVASFMSRAGSASRTASLQTLASLNEPSIIPALTQTVIGEYLFKYYPRLGPFGFESRHERFFWVHPYTLTLYWSASNPILENPANTKTKGVAILGVESVTDPNPYPTGLYHKSIVVTTETRTIKFTCPTRQRHNIWYNSLRYLLQRNMQGISLEDIADDPTDNMYSGKIFPLPGENTKSSSKRLSASRRSVSTRSLRHRVPQSRSFGNLR</sequence>
<proteinExistence type="evidence at protein level"/>
<gene>
    <name type="primary">NUM1</name>
    <name type="synonym">PAC12</name>
    <name type="ordered locus">YDR150W</name>
    <name type="ORF">YD8358.06</name>
</gene>
<evidence type="ECO:0000255" key="1">
    <source>
        <dbReference type="PROSITE-ProRule" id="PRU00145"/>
    </source>
</evidence>
<evidence type="ECO:0000256" key="2">
    <source>
        <dbReference type="SAM" id="MobiDB-lite"/>
    </source>
</evidence>
<evidence type="ECO:0000269" key="3">
    <source>
    </source>
</evidence>
<evidence type="ECO:0000269" key="4">
    <source>
    </source>
</evidence>
<evidence type="ECO:0000269" key="5">
    <source>
    </source>
</evidence>
<evidence type="ECO:0000269" key="6">
    <source>
    </source>
</evidence>
<evidence type="ECO:0000305" key="7"/>
<evidence type="ECO:0007744" key="8">
    <source>
    </source>
</evidence>
<evidence type="ECO:0007744" key="9">
    <source>
    </source>
</evidence>
<evidence type="ECO:0007744" key="10">
    <source>
    </source>
</evidence>